<organism>
    <name type="scientific">Polynucleobacter necessarius subsp. necessarius (strain STIR1)</name>
    <dbReference type="NCBI Taxonomy" id="452638"/>
    <lineage>
        <taxon>Bacteria</taxon>
        <taxon>Pseudomonadati</taxon>
        <taxon>Pseudomonadota</taxon>
        <taxon>Betaproteobacteria</taxon>
        <taxon>Burkholderiales</taxon>
        <taxon>Burkholderiaceae</taxon>
        <taxon>Polynucleobacter</taxon>
    </lineage>
</organism>
<comment type="function">
    <text evidence="1">Succinyl-CoA synthetase functions in the citric acid cycle (TCA), coupling the hydrolysis of succinyl-CoA to the synthesis of either ATP or GTP and thus represents the only step of substrate-level phosphorylation in the TCA. The beta subunit provides nucleotide specificity of the enzyme and binds the substrate succinate, while the binding sites for coenzyme A and phosphate are found in the alpha subunit.</text>
</comment>
<comment type="catalytic activity">
    <reaction evidence="1">
        <text>succinate + ATP + CoA = succinyl-CoA + ADP + phosphate</text>
        <dbReference type="Rhea" id="RHEA:17661"/>
        <dbReference type="ChEBI" id="CHEBI:30031"/>
        <dbReference type="ChEBI" id="CHEBI:30616"/>
        <dbReference type="ChEBI" id="CHEBI:43474"/>
        <dbReference type="ChEBI" id="CHEBI:57287"/>
        <dbReference type="ChEBI" id="CHEBI:57292"/>
        <dbReference type="ChEBI" id="CHEBI:456216"/>
        <dbReference type="EC" id="6.2.1.5"/>
    </reaction>
    <physiologicalReaction direction="right-to-left" evidence="1">
        <dbReference type="Rhea" id="RHEA:17663"/>
    </physiologicalReaction>
</comment>
<comment type="catalytic activity">
    <reaction evidence="1">
        <text>GTP + succinate + CoA = succinyl-CoA + GDP + phosphate</text>
        <dbReference type="Rhea" id="RHEA:22120"/>
        <dbReference type="ChEBI" id="CHEBI:30031"/>
        <dbReference type="ChEBI" id="CHEBI:37565"/>
        <dbReference type="ChEBI" id="CHEBI:43474"/>
        <dbReference type="ChEBI" id="CHEBI:57287"/>
        <dbReference type="ChEBI" id="CHEBI:57292"/>
        <dbReference type="ChEBI" id="CHEBI:58189"/>
    </reaction>
    <physiologicalReaction direction="right-to-left" evidence="1">
        <dbReference type="Rhea" id="RHEA:22122"/>
    </physiologicalReaction>
</comment>
<comment type="cofactor">
    <cofactor evidence="1">
        <name>Mg(2+)</name>
        <dbReference type="ChEBI" id="CHEBI:18420"/>
    </cofactor>
    <text evidence="1">Binds 1 Mg(2+) ion per subunit.</text>
</comment>
<comment type="pathway">
    <text evidence="1">Carbohydrate metabolism; tricarboxylic acid cycle; succinate from succinyl-CoA (ligase route): step 1/1.</text>
</comment>
<comment type="subunit">
    <text evidence="1">Heterotetramer of two alpha and two beta subunits.</text>
</comment>
<comment type="similarity">
    <text evidence="1">Belongs to the succinate/malate CoA ligase beta subunit family.</text>
</comment>
<gene>
    <name evidence="1" type="primary">sucC</name>
    <name type="ordered locus">Pnec_1547</name>
</gene>
<reference key="1">
    <citation type="journal article" date="2013" name="Proc. Natl. Acad. Sci. U.S.A.">
        <title>Polynucleobacter necessarius, a model for genome reduction in both free-living and symbiotic bacteria.</title>
        <authorList>
            <person name="Boscaro V."/>
            <person name="Felletti M."/>
            <person name="Vannini C."/>
            <person name="Ackerman M.S."/>
            <person name="Chain P.S."/>
            <person name="Malfatti S."/>
            <person name="Vergez L.M."/>
            <person name="Shin M."/>
            <person name="Doak T.G."/>
            <person name="Lynch M."/>
            <person name="Petroni G."/>
        </authorList>
    </citation>
    <scope>NUCLEOTIDE SEQUENCE [LARGE SCALE GENOMIC DNA]</scope>
    <source>
        <strain>STIR1</strain>
    </source>
</reference>
<keyword id="KW-0067">ATP-binding</keyword>
<keyword id="KW-0436">Ligase</keyword>
<keyword id="KW-0460">Magnesium</keyword>
<keyword id="KW-0479">Metal-binding</keyword>
<keyword id="KW-0547">Nucleotide-binding</keyword>
<keyword id="KW-0816">Tricarboxylic acid cycle</keyword>
<dbReference type="EC" id="6.2.1.5" evidence="1"/>
<dbReference type="EMBL" id="CP001010">
    <property type="protein sequence ID" value="ACB44629.1"/>
    <property type="molecule type" value="Genomic_DNA"/>
</dbReference>
<dbReference type="SMR" id="B1XRZ4"/>
<dbReference type="STRING" id="452638.Pnec_1547"/>
<dbReference type="KEGG" id="pne:Pnec_1547"/>
<dbReference type="eggNOG" id="COG0045">
    <property type="taxonomic scope" value="Bacteria"/>
</dbReference>
<dbReference type="HOGENOM" id="CLU_037430_0_2_4"/>
<dbReference type="OrthoDB" id="9802602at2"/>
<dbReference type="UniPathway" id="UPA00223">
    <property type="reaction ID" value="UER00999"/>
</dbReference>
<dbReference type="GO" id="GO:0005829">
    <property type="term" value="C:cytosol"/>
    <property type="evidence" value="ECO:0007669"/>
    <property type="project" value="TreeGrafter"/>
</dbReference>
<dbReference type="GO" id="GO:0042709">
    <property type="term" value="C:succinate-CoA ligase complex"/>
    <property type="evidence" value="ECO:0007669"/>
    <property type="project" value="TreeGrafter"/>
</dbReference>
<dbReference type="GO" id="GO:0005524">
    <property type="term" value="F:ATP binding"/>
    <property type="evidence" value="ECO:0007669"/>
    <property type="project" value="UniProtKB-UniRule"/>
</dbReference>
<dbReference type="GO" id="GO:0000287">
    <property type="term" value="F:magnesium ion binding"/>
    <property type="evidence" value="ECO:0007669"/>
    <property type="project" value="UniProtKB-UniRule"/>
</dbReference>
<dbReference type="GO" id="GO:0004775">
    <property type="term" value="F:succinate-CoA ligase (ADP-forming) activity"/>
    <property type="evidence" value="ECO:0007669"/>
    <property type="project" value="UniProtKB-UniRule"/>
</dbReference>
<dbReference type="GO" id="GO:0004776">
    <property type="term" value="F:succinate-CoA ligase (GDP-forming) activity"/>
    <property type="evidence" value="ECO:0007669"/>
    <property type="project" value="RHEA"/>
</dbReference>
<dbReference type="GO" id="GO:0006104">
    <property type="term" value="P:succinyl-CoA metabolic process"/>
    <property type="evidence" value="ECO:0007669"/>
    <property type="project" value="TreeGrafter"/>
</dbReference>
<dbReference type="GO" id="GO:0006099">
    <property type="term" value="P:tricarboxylic acid cycle"/>
    <property type="evidence" value="ECO:0007669"/>
    <property type="project" value="UniProtKB-UniRule"/>
</dbReference>
<dbReference type="FunFam" id="3.30.1490.20:FF:000002">
    <property type="entry name" value="Succinate--CoA ligase [ADP-forming] subunit beta"/>
    <property type="match status" value="1"/>
</dbReference>
<dbReference type="FunFam" id="3.30.470.20:FF:000002">
    <property type="entry name" value="Succinate--CoA ligase [ADP-forming] subunit beta"/>
    <property type="match status" value="1"/>
</dbReference>
<dbReference type="FunFam" id="3.40.50.261:FF:000001">
    <property type="entry name" value="Succinate--CoA ligase [ADP-forming] subunit beta"/>
    <property type="match status" value="1"/>
</dbReference>
<dbReference type="Gene3D" id="3.30.1490.20">
    <property type="entry name" value="ATP-grasp fold, A domain"/>
    <property type="match status" value="1"/>
</dbReference>
<dbReference type="Gene3D" id="3.30.470.20">
    <property type="entry name" value="ATP-grasp fold, B domain"/>
    <property type="match status" value="1"/>
</dbReference>
<dbReference type="Gene3D" id="3.40.50.261">
    <property type="entry name" value="Succinyl-CoA synthetase domains"/>
    <property type="match status" value="1"/>
</dbReference>
<dbReference type="HAMAP" id="MF_00558">
    <property type="entry name" value="Succ_CoA_beta"/>
    <property type="match status" value="1"/>
</dbReference>
<dbReference type="InterPro" id="IPR011761">
    <property type="entry name" value="ATP-grasp"/>
</dbReference>
<dbReference type="InterPro" id="IPR013650">
    <property type="entry name" value="ATP-grasp_succ-CoA_synth-type"/>
</dbReference>
<dbReference type="InterPro" id="IPR013815">
    <property type="entry name" value="ATP_grasp_subdomain_1"/>
</dbReference>
<dbReference type="InterPro" id="IPR017866">
    <property type="entry name" value="Succ-CoA_synthase_bsu_CS"/>
</dbReference>
<dbReference type="InterPro" id="IPR005811">
    <property type="entry name" value="SUCC_ACL_C"/>
</dbReference>
<dbReference type="InterPro" id="IPR005809">
    <property type="entry name" value="Succ_CoA_ligase-like_bsu"/>
</dbReference>
<dbReference type="InterPro" id="IPR016102">
    <property type="entry name" value="Succinyl-CoA_synth-like"/>
</dbReference>
<dbReference type="NCBIfam" id="NF001913">
    <property type="entry name" value="PRK00696.1"/>
    <property type="match status" value="1"/>
</dbReference>
<dbReference type="NCBIfam" id="TIGR01016">
    <property type="entry name" value="sucCoAbeta"/>
    <property type="match status" value="1"/>
</dbReference>
<dbReference type="PANTHER" id="PTHR11815:SF10">
    <property type="entry name" value="SUCCINATE--COA LIGASE [GDP-FORMING] SUBUNIT BETA, MITOCHONDRIAL"/>
    <property type="match status" value="1"/>
</dbReference>
<dbReference type="PANTHER" id="PTHR11815">
    <property type="entry name" value="SUCCINYL-COA SYNTHETASE BETA CHAIN"/>
    <property type="match status" value="1"/>
</dbReference>
<dbReference type="Pfam" id="PF08442">
    <property type="entry name" value="ATP-grasp_2"/>
    <property type="match status" value="1"/>
</dbReference>
<dbReference type="Pfam" id="PF00549">
    <property type="entry name" value="Ligase_CoA"/>
    <property type="match status" value="1"/>
</dbReference>
<dbReference type="PIRSF" id="PIRSF001554">
    <property type="entry name" value="SucCS_beta"/>
    <property type="match status" value="1"/>
</dbReference>
<dbReference type="SUPFAM" id="SSF56059">
    <property type="entry name" value="Glutathione synthetase ATP-binding domain-like"/>
    <property type="match status" value="1"/>
</dbReference>
<dbReference type="SUPFAM" id="SSF52210">
    <property type="entry name" value="Succinyl-CoA synthetase domains"/>
    <property type="match status" value="1"/>
</dbReference>
<dbReference type="PROSITE" id="PS50975">
    <property type="entry name" value="ATP_GRASP"/>
    <property type="match status" value="1"/>
</dbReference>
<dbReference type="PROSITE" id="PS01217">
    <property type="entry name" value="SUCCINYL_COA_LIG_3"/>
    <property type="match status" value="1"/>
</dbReference>
<proteinExistence type="inferred from homology"/>
<evidence type="ECO:0000255" key="1">
    <source>
        <dbReference type="HAMAP-Rule" id="MF_00558"/>
    </source>
</evidence>
<protein>
    <recommendedName>
        <fullName evidence="1">Succinate--CoA ligase [ADP-forming] subunit beta</fullName>
        <ecNumber evidence="1">6.2.1.5</ecNumber>
    </recommendedName>
    <alternativeName>
        <fullName evidence="1">Succinyl-CoA synthetase subunit beta</fullName>
        <shortName evidence="1">SCS-beta</shortName>
    </alternativeName>
</protein>
<feature type="chain" id="PRO_1000129208" description="Succinate--CoA ligase [ADP-forming] subunit beta">
    <location>
        <begin position="1"/>
        <end position="389"/>
    </location>
</feature>
<feature type="domain" description="ATP-grasp" evidence="1">
    <location>
        <begin position="9"/>
        <end position="244"/>
    </location>
</feature>
<feature type="binding site" evidence="1">
    <location>
        <position position="46"/>
    </location>
    <ligand>
        <name>ATP</name>
        <dbReference type="ChEBI" id="CHEBI:30616"/>
    </ligand>
</feature>
<feature type="binding site" evidence="1">
    <location>
        <begin position="53"/>
        <end position="55"/>
    </location>
    <ligand>
        <name>ATP</name>
        <dbReference type="ChEBI" id="CHEBI:30616"/>
    </ligand>
</feature>
<feature type="binding site" evidence="1">
    <location>
        <position position="99"/>
    </location>
    <ligand>
        <name>ATP</name>
        <dbReference type="ChEBI" id="CHEBI:30616"/>
    </ligand>
</feature>
<feature type="binding site" evidence="1">
    <location>
        <position position="102"/>
    </location>
    <ligand>
        <name>ATP</name>
        <dbReference type="ChEBI" id="CHEBI:30616"/>
    </ligand>
</feature>
<feature type="binding site" evidence="1">
    <location>
        <position position="107"/>
    </location>
    <ligand>
        <name>ATP</name>
        <dbReference type="ChEBI" id="CHEBI:30616"/>
    </ligand>
</feature>
<feature type="binding site" evidence="1">
    <location>
        <position position="199"/>
    </location>
    <ligand>
        <name>Mg(2+)</name>
        <dbReference type="ChEBI" id="CHEBI:18420"/>
    </ligand>
</feature>
<feature type="binding site" evidence="1">
    <location>
        <position position="213"/>
    </location>
    <ligand>
        <name>Mg(2+)</name>
        <dbReference type="ChEBI" id="CHEBI:18420"/>
    </ligand>
</feature>
<feature type="binding site" evidence="1">
    <location>
        <position position="264"/>
    </location>
    <ligand>
        <name>substrate</name>
        <note>ligand shared with subunit alpha</note>
    </ligand>
</feature>
<feature type="binding site" evidence="1">
    <location>
        <begin position="321"/>
        <end position="323"/>
    </location>
    <ligand>
        <name>substrate</name>
        <note>ligand shared with subunit alpha</note>
    </ligand>
</feature>
<accession>B1XRZ4</accession>
<name>SUCC_POLNS</name>
<sequence>MKIHEYQGKELLRQFNVPVPNGIPAFSVDEAVKAAEKLGGPVWVVKAQIHAGGRGKGGGVKLAKSMDEVKRYASEILGMQLKTHQTGPEGQKVNRLLIEDGADIKKEYYFSIVTDRGTQKNVIMASSEGGMDIEEVAESHPEKIIKVFVDPMVGLTDADCDIIAKGIGVPEASIPMARDVFKNLYKTYWDTDASLVEINPLILEGNGKIKALDAKFNFDPNALFRHPEIVAYRDIDEEDAAEIEASKFDLTYISLDGNIGCLVNGAGLAMATMDAIKLFGGEPANFLDVGGGATAEKVTEAFKIMLKNKNVQAILVNIFGGIMRCDVIADGVVTACKVVNLTVPLVVRMKGTNEELGKKILADSGLPIISTDSMTEAATKVVAAVAKNK</sequence>